<gene>
    <name evidence="1" type="primary">clpP</name>
    <name type="ordered locus">Cpha266_2030</name>
</gene>
<name>CLPP_CHLPD</name>
<reference key="1">
    <citation type="submission" date="2006-12" db="EMBL/GenBank/DDBJ databases">
        <title>Complete sequence of Chlorobium phaeobacteroides DSM 266.</title>
        <authorList>
            <consortium name="US DOE Joint Genome Institute"/>
            <person name="Copeland A."/>
            <person name="Lucas S."/>
            <person name="Lapidus A."/>
            <person name="Barry K."/>
            <person name="Detter J.C."/>
            <person name="Glavina del Rio T."/>
            <person name="Hammon N."/>
            <person name="Israni S."/>
            <person name="Pitluck S."/>
            <person name="Goltsman E."/>
            <person name="Schmutz J."/>
            <person name="Larimer F."/>
            <person name="Land M."/>
            <person name="Hauser L."/>
            <person name="Mikhailova N."/>
            <person name="Li T."/>
            <person name="Overmann J."/>
            <person name="Bryant D.A."/>
            <person name="Richardson P."/>
        </authorList>
    </citation>
    <scope>NUCLEOTIDE SEQUENCE [LARGE SCALE GENOMIC DNA]</scope>
    <source>
        <strain>DSM 266 / SMG 266 / 2430</strain>
    </source>
</reference>
<organism>
    <name type="scientific">Chlorobium phaeobacteroides (strain DSM 266 / SMG 266 / 2430)</name>
    <dbReference type="NCBI Taxonomy" id="290317"/>
    <lineage>
        <taxon>Bacteria</taxon>
        <taxon>Pseudomonadati</taxon>
        <taxon>Chlorobiota</taxon>
        <taxon>Chlorobiia</taxon>
        <taxon>Chlorobiales</taxon>
        <taxon>Chlorobiaceae</taxon>
        <taxon>Chlorobium/Pelodictyon group</taxon>
        <taxon>Chlorobium</taxon>
    </lineage>
</organism>
<accession>A1BI15</accession>
<dbReference type="EC" id="3.4.21.92" evidence="1"/>
<dbReference type="EMBL" id="CP000492">
    <property type="protein sequence ID" value="ABL66042.1"/>
    <property type="molecule type" value="Genomic_DNA"/>
</dbReference>
<dbReference type="RefSeq" id="WP_011745846.1">
    <property type="nucleotide sequence ID" value="NC_008639.1"/>
</dbReference>
<dbReference type="SMR" id="A1BI15"/>
<dbReference type="STRING" id="290317.Cpha266_2030"/>
<dbReference type="MEROPS" id="S14.001"/>
<dbReference type="KEGG" id="cph:Cpha266_2030"/>
<dbReference type="eggNOG" id="COG0740">
    <property type="taxonomic scope" value="Bacteria"/>
</dbReference>
<dbReference type="HOGENOM" id="CLU_058707_3_2_10"/>
<dbReference type="OrthoDB" id="9802800at2"/>
<dbReference type="Proteomes" id="UP000008701">
    <property type="component" value="Chromosome"/>
</dbReference>
<dbReference type="GO" id="GO:0005737">
    <property type="term" value="C:cytoplasm"/>
    <property type="evidence" value="ECO:0007669"/>
    <property type="project" value="UniProtKB-SubCell"/>
</dbReference>
<dbReference type="GO" id="GO:0009368">
    <property type="term" value="C:endopeptidase Clp complex"/>
    <property type="evidence" value="ECO:0007669"/>
    <property type="project" value="TreeGrafter"/>
</dbReference>
<dbReference type="GO" id="GO:0004176">
    <property type="term" value="F:ATP-dependent peptidase activity"/>
    <property type="evidence" value="ECO:0007669"/>
    <property type="project" value="InterPro"/>
</dbReference>
<dbReference type="GO" id="GO:0051117">
    <property type="term" value="F:ATPase binding"/>
    <property type="evidence" value="ECO:0007669"/>
    <property type="project" value="TreeGrafter"/>
</dbReference>
<dbReference type="GO" id="GO:0004252">
    <property type="term" value="F:serine-type endopeptidase activity"/>
    <property type="evidence" value="ECO:0007669"/>
    <property type="project" value="UniProtKB-UniRule"/>
</dbReference>
<dbReference type="GO" id="GO:0006515">
    <property type="term" value="P:protein quality control for misfolded or incompletely synthesized proteins"/>
    <property type="evidence" value="ECO:0007669"/>
    <property type="project" value="TreeGrafter"/>
</dbReference>
<dbReference type="CDD" id="cd07017">
    <property type="entry name" value="S14_ClpP_2"/>
    <property type="match status" value="1"/>
</dbReference>
<dbReference type="FunFam" id="3.90.226.10:FF:000001">
    <property type="entry name" value="ATP-dependent Clp protease proteolytic subunit"/>
    <property type="match status" value="1"/>
</dbReference>
<dbReference type="Gene3D" id="3.90.226.10">
    <property type="entry name" value="2-enoyl-CoA Hydratase, Chain A, domain 1"/>
    <property type="match status" value="1"/>
</dbReference>
<dbReference type="HAMAP" id="MF_00444">
    <property type="entry name" value="ClpP"/>
    <property type="match status" value="1"/>
</dbReference>
<dbReference type="InterPro" id="IPR001907">
    <property type="entry name" value="ClpP"/>
</dbReference>
<dbReference type="InterPro" id="IPR029045">
    <property type="entry name" value="ClpP/crotonase-like_dom_sf"/>
</dbReference>
<dbReference type="InterPro" id="IPR023562">
    <property type="entry name" value="ClpP/TepA"/>
</dbReference>
<dbReference type="InterPro" id="IPR033135">
    <property type="entry name" value="ClpP_His_AS"/>
</dbReference>
<dbReference type="InterPro" id="IPR018215">
    <property type="entry name" value="ClpP_Ser_AS"/>
</dbReference>
<dbReference type="NCBIfam" id="TIGR00493">
    <property type="entry name" value="clpP"/>
    <property type="match status" value="1"/>
</dbReference>
<dbReference type="NCBIfam" id="NF001368">
    <property type="entry name" value="PRK00277.1"/>
    <property type="match status" value="1"/>
</dbReference>
<dbReference type="NCBIfam" id="NF009205">
    <property type="entry name" value="PRK12553.1"/>
    <property type="match status" value="1"/>
</dbReference>
<dbReference type="PANTHER" id="PTHR10381">
    <property type="entry name" value="ATP-DEPENDENT CLP PROTEASE PROTEOLYTIC SUBUNIT"/>
    <property type="match status" value="1"/>
</dbReference>
<dbReference type="PANTHER" id="PTHR10381:SF70">
    <property type="entry name" value="ATP-DEPENDENT CLP PROTEASE PROTEOLYTIC SUBUNIT"/>
    <property type="match status" value="1"/>
</dbReference>
<dbReference type="Pfam" id="PF00574">
    <property type="entry name" value="CLP_protease"/>
    <property type="match status" value="1"/>
</dbReference>
<dbReference type="PRINTS" id="PR00127">
    <property type="entry name" value="CLPPROTEASEP"/>
</dbReference>
<dbReference type="SUPFAM" id="SSF52096">
    <property type="entry name" value="ClpP/crotonase"/>
    <property type="match status" value="1"/>
</dbReference>
<dbReference type="PROSITE" id="PS00382">
    <property type="entry name" value="CLP_PROTEASE_HIS"/>
    <property type="match status" value="1"/>
</dbReference>
<dbReference type="PROSITE" id="PS00381">
    <property type="entry name" value="CLP_PROTEASE_SER"/>
    <property type="match status" value="1"/>
</dbReference>
<keyword id="KW-0963">Cytoplasm</keyword>
<keyword id="KW-0378">Hydrolase</keyword>
<keyword id="KW-0645">Protease</keyword>
<keyword id="KW-1185">Reference proteome</keyword>
<keyword id="KW-0720">Serine protease</keyword>
<feature type="chain" id="PRO_1000026080" description="ATP-dependent Clp protease proteolytic subunit">
    <location>
        <begin position="1"/>
        <end position="227"/>
    </location>
</feature>
<feature type="active site" description="Nucleophile" evidence="1">
    <location>
        <position position="123"/>
    </location>
</feature>
<feature type="active site" evidence="1">
    <location>
        <position position="148"/>
    </location>
</feature>
<protein>
    <recommendedName>
        <fullName evidence="1">ATP-dependent Clp protease proteolytic subunit</fullName>
        <ecNumber evidence="1">3.4.21.92</ecNumber>
    </recommendedName>
    <alternativeName>
        <fullName evidence="1">Endopeptidase Clp</fullName>
    </alternativeName>
</protein>
<proteinExistence type="inferred from homology"/>
<evidence type="ECO:0000255" key="1">
    <source>
        <dbReference type="HAMAP-Rule" id="MF_00444"/>
    </source>
</evidence>
<comment type="function">
    <text evidence="1">Cleaves peptides in various proteins in a process that requires ATP hydrolysis. Has a chymotrypsin-like activity. Plays a major role in the degradation of misfolded proteins.</text>
</comment>
<comment type="catalytic activity">
    <reaction evidence="1">
        <text>Hydrolysis of proteins to small peptides in the presence of ATP and magnesium. alpha-casein is the usual test substrate. In the absence of ATP, only oligopeptides shorter than five residues are hydrolyzed (such as succinyl-Leu-Tyr-|-NHMec, and Leu-Tyr-Leu-|-Tyr-Trp, in which cleavage of the -Tyr-|-Leu- and -Tyr-|-Trp bonds also occurs).</text>
        <dbReference type="EC" id="3.4.21.92"/>
    </reaction>
</comment>
<comment type="subunit">
    <text evidence="1">Fourteen ClpP subunits assemble into 2 heptameric rings which stack back to back to give a disk-like structure with a central cavity, resembling the structure of eukaryotic proteasomes.</text>
</comment>
<comment type="subcellular location">
    <subcellularLocation>
        <location evidence="1">Cytoplasm</location>
    </subcellularLocation>
</comment>
<comment type="similarity">
    <text evidence="1">Belongs to the peptidase S14 family.</text>
</comment>
<sequence>MANINFGFEHHARKLYSGAIEQGITGSLVPMVIETSGRGERAFDIFSRLLRERIIFLGSGIDEHVAGLIMAQLIFLESEDPERDIYIYVNSPGGSVSAGLGIYDTMQYIRPDVSTVCVGMAASMGAFLLASGTKGKRASLPHSRIMIHQPSGGAQGQESDIIIQAREIEKIRRLLEEILASHTGKDVQQVREDSERDRWMNAQEALEYGIIDQIFEKRPKPDKEKES</sequence>